<proteinExistence type="inferred from homology"/>
<comment type="catalytic activity">
    <reaction evidence="1">
        <text>tRNA(Gly) + glycine + ATP = glycyl-tRNA(Gly) + AMP + diphosphate</text>
        <dbReference type="Rhea" id="RHEA:16013"/>
        <dbReference type="Rhea" id="RHEA-COMP:9664"/>
        <dbReference type="Rhea" id="RHEA-COMP:9683"/>
        <dbReference type="ChEBI" id="CHEBI:30616"/>
        <dbReference type="ChEBI" id="CHEBI:33019"/>
        <dbReference type="ChEBI" id="CHEBI:57305"/>
        <dbReference type="ChEBI" id="CHEBI:78442"/>
        <dbReference type="ChEBI" id="CHEBI:78522"/>
        <dbReference type="ChEBI" id="CHEBI:456215"/>
        <dbReference type="EC" id="6.1.1.14"/>
    </reaction>
</comment>
<comment type="subunit">
    <text evidence="1">Tetramer of two alpha and two beta subunits.</text>
</comment>
<comment type="subcellular location">
    <subcellularLocation>
        <location evidence="1">Cytoplasm</location>
    </subcellularLocation>
</comment>
<comment type="similarity">
    <text evidence="1">Belongs to the class-II aminoacyl-tRNA synthetase family.</text>
</comment>
<organism>
    <name type="scientific">Nitratidesulfovibrio vulgaris (strain DP4)</name>
    <name type="common">Desulfovibrio vulgaris</name>
    <dbReference type="NCBI Taxonomy" id="391774"/>
    <lineage>
        <taxon>Bacteria</taxon>
        <taxon>Pseudomonadati</taxon>
        <taxon>Thermodesulfobacteriota</taxon>
        <taxon>Desulfovibrionia</taxon>
        <taxon>Desulfovibrionales</taxon>
        <taxon>Desulfovibrionaceae</taxon>
        <taxon>Nitratidesulfovibrio</taxon>
    </lineage>
</organism>
<sequence length="289" mass="33236">MHFQNVILTLQNYWASRGCVITQPIDVECGAGTFNPSTFLRVIGPEPWNVAYVEPSRRPTDGRYGENPNRLQHYFQFQVILKPSPDNVQELYLGSLRALGIDPAAHDIRFVEDDWESPTLGAWGLGWEVWLNGMEVTQFTYFQQVGGIDLAPTSVEITYGLERLCMYLQGKESVYDLDWNEHVTYGDIYHQNEVEQSKYNFERSDAAMLLHAFNAYETECRRLTEEGLLWPAYDYCLKCSHTFNLLDARGAISITERTGYIGRVRYLASGVARLYAAQREQLGYPMLRK</sequence>
<keyword id="KW-0030">Aminoacyl-tRNA synthetase</keyword>
<keyword id="KW-0067">ATP-binding</keyword>
<keyword id="KW-0963">Cytoplasm</keyword>
<keyword id="KW-0436">Ligase</keyword>
<keyword id="KW-0547">Nucleotide-binding</keyword>
<keyword id="KW-0648">Protein biosynthesis</keyword>
<name>SYGA_NITV4</name>
<feature type="chain" id="PRO_1000047417" description="Glycine--tRNA ligase alpha subunit">
    <location>
        <begin position="1"/>
        <end position="289"/>
    </location>
</feature>
<gene>
    <name evidence="1" type="primary">glyQ</name>
    <name type="ordered locus">Dvul_1265</name>
</gene>
<dbReference type="EC" id="6.1.1.14" evidence="1"/>
<dbReference type="EMBL" id="CP000527">
    <property type="protein sequence ID" value="ABM28284.1"/>
    <property type="molecule type" value="Genomic_DNA"/>
</dbReference>
<dbReference type="RefSeq" id="WP_010939184.1">
    <property type="nucleotide sequence ID" value="NC_008751.1"/>
</dbReference>
<dbReference type="SMR" id="A1VCW8"/>
<dbReference type="KEGG" id="dvl:Dvul_1265"/>
<dbReference type="HOGENOM" id="CLU_057066_1_0_7"/>
<dbReference type="Proteomes" id="UP000009173">
    <property type="component" value="Chromosome"/>
</dbReference>
<dbReference type="GO" id="GO:0005829">
    <property type="term" value="C:cytosol"/>
    <property type="evidence" value="ECO:0007669"/>
    <property type="project" value="TreeGrafter"/>
</dbReference>
<dbReference type="GO" id="GO:0005524">
    <property type="term" value="F:ATP binding"/>
    <property type="evidence" value="ECO:0007669"/>
    <property type="project" value="UniProtKB-UniRule"/>
</dbReference>
<dbReference type="GO" id="GO:0004820">
    <property type="term" value="F:glycine-tRNA ligase activity"/>
    <property type="evidence" value="ECO:0007669"/>
    <property type="project" value="UniProtKB-UniRule"/>
</dbReference>
<dbReference type="GO" id="GO:0006426">
    <property type="term" value="P:glycyl-tRNA aminoacylation"/>
    <property type="evidence" value="ECO:0007669"/>
    <property type="project" value="UniProtKB-UniRule"/>
</dbReference>
<dbReference type="CDD" id="cd00733">
    <property type="entry name" value="GlyRS_alpha_core"/>
    <property type="match status" value="1"/>
</dbReference>
<dbReference type="FunFam" id="3.30.930.10:FF:000006">
    <property type="entry name" value="Glycine--tRNA ligase alpha subunit"/>
    <property type="match status" value="1"/>
</dbReference>
<dbReference type="Gene3D" id="3.30.930.10">
    <property type="entry name" value="Bira Bifunctional Protein, Domain 2"/>
    <property type="match status" value="1"/>
</dbReference>
<dbReference type="Gene3D" id="1.20.58.180">
    <property type="entry name" value="Class II aaRS and biotin synthetases, domain 2"/>
    <property type="match status" value="1"/>
</dbReference>
<dbReference type="HAMAP" id="MF_00254">
    <property type="entry name" value="Gly_tRNA_synth_alpha"/>
    <property type="match status" value="1"/>
</dbReference>
<dbReference type="InterPro" id="IPR045864">
    <property type="entry name" value="aa-tRNA-synth_II/BPL/LPL"/>
</dbReference>
<dbReference type="InterPro" id="IPR006194">
    <property type="entry name" value="Gly-tRNA-synth_heterodimer"/>
</dbReference>
<dbReference type="InterPro" id="IPR002310">
    <property type="entry name" value="Gly-tRNA_ligase_asu"/>
</dbReference>
<dbReference type="NCBIfam" id="TIGR00388">
    <property type="entry name" value="glyQ"/>
    <property type="match status" value="1"/>
</dbReference>
<dbReference type="NCBIfam" id="NF006827">
    <property type="entry name" value="PRK09348.1"/>
    <property type="match status" value="1"/>
</dbReference>
<dbReference type="PANTHER" id="PTHR30075:SF2">
    <property type="entry name" value="GLYCINE--TRNA LIGASE, CHLOROPLASTIC_MITOCHONDRIAL 2"/>
    <property type="match status" value="1"/>
</dbReference>
<dbReference type="PANTHER" id="PTHR30075">
    <property type="entry name" value="GLYCYL-TRNA SYNTHETASE"/>
    <property type="match status" value="1"/>
</dbReference>
<dbReference type="Pfam" id="PF02091">
    <property type="entry name" value="tRNA-synt_2e"/>
    <property type="match status" value="1"/>
</dbReference>
<dbReference type="PRINTS" id="PR01044">
    <property type="entry name" value="TRNASYNTHGA"/>
</dbReference>
<dbReference type="SUPFAM" id="SSF55681">
    <property type="entry name" value="Class II aaRS and biotin synthetases"/>
    <property type="match status" value="1"/>
</dbReference>
<dbReference type="PROSITE" id="PS50861">
    <property type="entry name" value="AA_TRNA_LIGASE_II_GLYAB"/>
    <property type="match status" value="1"/>
</dbReference>
<evidence type="ECO:0000255" key="1">
    <source>
        <dbReference type="HAMAP-Rule" id="MF_00254"/>
    </source>
</evidence>
<accession>A1VCW8</accession>
<protein>
    <recommendedName>
        <fullName evidence="1">Glycine--tRNA ligase alpha subunit</fullName>
        <ecNumber evidence="1">6.1.1.14</ecNumber>
    </recommendedName>
    <alternativeName>
        <fullName evidence="1">Glycyl-tRNA synthetase alpha subunit</fullName>
        <shortName evidence="1">GlyRS</shortName>
    </alternativeName>
</protein>
<reference key="1">
    <citation type="journal article" date="2009" name="Environ. Microbiol.">
        <title>Contribution of mobile genetic elements to Desulfovibrio vulgaris genome plasticity.</title>
        <authorList>
            <person name="Walker C.B."/>
            <person name="Stolyar S."/>
            <person name="Chivian D."/>
            <person name="Pinel N."/>
            <person name="Gabster J.A."/>
            <person name="Dehal P.S."/>
            <person name="He Z."/>
            <person name="Yang Z.K."/>
            <person name="Yen H.C."/>
            <person name="Zhou J."/>
            <person name="Wall J.D."/>
            <person name="Hazen T.C."/>
            <person name="Arkin A.P."/>
            <person name="Stahl D.A."/>
        </authorList>
    </citation>
    <scope>NUCLEOTIDE SEQUENCE [LARGE SCALE GENOMIC DNA]</scope>
    <source>
        <strain>DP4</strain>
    </source>
</reference>